<comment type="function">
    <text evidence="2">Activates MyD88-dependent canonical NF-kappa-B signaling in host macrophages via interaction with host TLR1 and TLR4; this drives the expression of neutrophil chemoattractants, followed by the subsequent influx of neutrophils and recruitment of myeloid cells at the bite site.</text>
</comment>
<comment type="function">
    <text evidence="2">(Microbial infection) Promotes Zika virus infection in mouse model by facilitating recruitment of flavivirus-permissive myeloid cells at the bite site.</text>
</comment>
<comment type="function">
    <text evidence="2">(Microbial infection) Promotes dengue virus infection in mouse model by facilitating recruitment of flavivirus-permissive myeloid cells at the bite site.</text>
</comment>
<comment type="subunit">
    <text evidence="2">Interacts with mouse TLR1; the interaction promotes activation of canonical NF-kappa-B signaling in host macrophages (PubMed:38378891). Interacts with human TLR1 (PubMed:38378891). Interacts with mouse TLR4; the interaction promotes activation of canonical NF-kappa-B signaling in host macrophages (PubMed:38378891). Interacts with human TLR4 (PubMed:38378891).</text>
</comment>
<comment type="subcellular location">
    <subcellularLocation>
        <location evidence="4">Secreted</location>
    </subcellularLocation>
</comment>
<comment type="tissue specificity">
    <text evidence="2">Female salivary gland (at protein level).</text>
</comment>
<comment type="induction">
    <text evidence="2">Up-regulated following blood feeding.</text>
</comment>
<comment type="disruption phenotype">
    <text evidence="2">RNAi-mediated knockdown results in reduced neutrophil infiltration of the host skin at the bite site.</text>
</comment>
<comment type="miscellaneous">
    <text evidence="2">Mice with dietary resveratrol supplementation, which attenuates activation of MyD88-dependent NF-kappa-B signaling induced by the protein, are less susceptible to Zika virus infection after mosquito bite.</text>
</comment>
<comment type="similarity">
    <text evidence="4">Belongs to the PBP/GOBP family.</text>
</comment>
<feature type="signal peptide" evidence="1">
    <location>
        <begin position="1"/>
        <end position="19"/>
    </location>
</feature>
<feature type="chain" id="PRO_0000460969" description="Neutrophil recruitment protein" evidence="1">
    <location>
        <begin position="20"/>
        <end position="157"/>
    </location>
</feature>
<protein>
    <recommendedName>
        <fullName evidence="3">Neutrophil recruitment protein</fullName>
        <shortName evidence="3">AaNRP</shortName>
    </recommendedName>
</protein>
<accession>Q172F2</accession>
<accession>A6KVJ9</accession>
<reference evidence="5" key="1">
    <citation type="journal article" date="2007" name="Science">
        <title>Genome sequence of Aedes aegypti, a major arbovirus vector.</title>
        <authorList>
            <person name="Nene V."/>
            <person name="Wortman J.R."/>
            <person name="Lawson D."/>
            <person name="Haas B.J."/>
            <person name="Kodira C.D."/>
            <person name="Tu Z.J."/>
            <person name="Loftus B.J."/>
            <person name="Xi Z."/>
            <person name="Megy K."/>
            <person name="Grabherr M."/>
            <person name="Ren Q."/>
            <person name="Zdobnov E.M."/>
            <person name="Lobo N.F."/>
            <person name="Campbell K.S."/>
            <person name="Brown S.E."/>
            <person name="Bonaldo M.F."/>
            <person name="Zhu J."/>
            <person name="Sinkins S.P."/>
            <person name="Hogenkamp D.G."/>
            <person name="Amedeo P."/>
            <person name="Arensburger P."/>
            <person name="Atkinson P.W."/>
            <person name="Bidwell S.L."/>
            <person name="Biedler J."/>
            <person name="Birney E."/>
            <person name="Bruggner R.V."/>
            <person name="Costas J."/>
            <person name="Coy M.R."/>
            <person name="Crabtree J."/>
            <person name="Crawford M."/>
            <person name="DeBruyn B."/>
            <person name="DeCaprio D."/>
            <person name="Eiglmeier K."/>
            <person name="Eisenstadt E."/>
            <person name="El-Dorry H."/>
            <person name="Gelbart W.M."/>
            <person name="Gomes S.L."/>
            <person name="Hammond M."/>
            <person name="Hannick L.I."/>
            <person name="Hogan J.R."/>
            <person name="Holmes M.H."/>
            <person name="Jaffe D."/>
            <person name="Johnston S.J."/>
            <person name="Kennedy R.C."/>
            <person name="Koo H."/>
            <person name="Kravitz S."/>
            <person name="Kriventseva E.V."/>
            <person name="Kulp D."/>
            <person name="Labutti K."/>
            <person name="Lee E."/>
            <person name="Li S."/>
            <person name="Lovin D.D."/>
            <person name="Mao C."/>
            <person name="Mauceli E."/>
            <person name="Menck C.F."/>
            <person name="Miller J.R."/>
            <person name="Montgomery P."/>
            <person name="Mori A."/>
            <person name="Nascimento A.L."/>
            <person name="Naveira H.F."/>
            <person name="Nusbaum C."/>
            <person name="O'Leary S.B."/>
            <person name="Orvis J."/>
            <person name="Pertea M."/>
            <person name="Quesneville H."/>
            <person name="Reidenbach K.R."/>
            <person name="Rogers Y.-H.C."/>
            <person name="Roth C.W."/>
            <person name="Schneider J.R."/>
            <person name="Schatz M."/>
            <person name="Shumway M."/>
            <person name="Stanke M."/>
            <person name="Stinson E.O."/>
            <person name="Tubio J.M.C."/>
            <person name="Vanzee J.P."/>
            <person name="Verjovski-Almeida S."/>
            <person name="Werner D."/>
            <person name="White O.R."/>
            <person name="Wyder S."/>
            <person name="Zeng Q."/>
            <person name="Zhao Q."/>
            <person name="Zhao Y."/>
            <person name="Hill C.A."/>
            <person name="Raikhel A.S."/>
            <person name="Soares M.B."/>
            <person name="Knudson D.L."/>
            <person name="Lee N.H."/>
            <person name="Galagan J."/>
            <person name="Salzberg S.L."/>
            <person name="Paulsen I.T."/>
            <person name="Dimopoulos G."/>
            <person name="Collins F.H."/>
            <person name="Bruce B."/>
            <person name="Fraser-Liggett C.M."/>
            <person name="Severson D.W."/>
        </authorList>
    </citation>
    <scope>NUCLEOTIDE SEQUENCE [LARGE SCALE GENOMIC DNA]</scope>
    <source>
        <strain evidence="5">Liverpool</strain>
    </source>
</reference>
<reference evidence="6" key="2">
    <citation type="submission" date="2017-06" db="EMBL/GenBank/DDBJ databases">
        <title>Aedes aegypti genome working group (AGWG) sequencing and assembly.</title>
        <authorList>
            <consortium name="Aedes aegypti Genome Working Group (AGWG)"/>
            <person name="Matthews B.J."/>
        </authorList>
    </citation>
    <scope>NUCLEOTIDE SEQUENCE [LARGE SCALE GENOMIC DNA]</scope>
    <source>
        <strain evidence="6">LVP_AGWG</strain>
    </source>
</reference>
<reference evidence="4" key="3">
    <citation type="journal article" date="2024" name="EMBO J.">
        <title>A mosquito salivary protein-driven influx of myeloid cells facilitates flavivirus transmission.</title>
        <authorList>
            <person name="Wang Z."/>
            <person name="Nie K."/>
            <person name="Liang Y."/>
            <person name="Niu J."/>
            <person name="Yu X."/>
            <person name="Zhang O."/>
            <person name="Liu L."/>
            <person name="Shi X."/>
            <person name="Wang Y."/>
            <person name="Feng X."/>
            <person name="Zhu Y."/>
            <person name="Wang P."/>
            <person name="Cheng G."/>
        </authorList>
    </citation>
    <scope>FUNCTION</scope>
    <scope>FUNCTION (MICROBIAL INFECTION)</scope>
    <scope>INTERACTION WITH HOST TLR1 AND TLR4</scope>
    <scope>TISSUE SPECIFICITY</scope>
    <scope>INDUCTION BY BLOOD FEEDING</scope>
    <scope>DISRUPTION PHENOTYPE</scope>
</reference>
<sequence length="157" mass="18567">MCSIWLTFFLSFLILNTKAEQVYQTCADESFEPNDYWKQKMLCMAYRFNFYGYKSNSMYAFMDCTFIRVGWMDKGTRKWNVAKMAADMHASGFPDRTAELTEIEAMCNMEFRNKLGPMSYYRCIETSKQGPGEFKQMLRNREVEFFSKNQCQGVDLD</sequence>
<proteinExistence type="evidence at protein level"/>
<name>NRP_AEDAE</name>
<dbReference type="EMBL" id="CH477438">
    <property type="protein sequence ID" value="EAT40916.1"/>
    <property type="molecule type" value="Genomic_DNA"/>
</dbReference>
<dbReference type="EMBL" id="CH477438">
    <property type="protein sequence ID" value="EAT40917.1"/>
    <property type="molecule type" value="Genomic_DNA"/>
</dbReference>
<dbReference type="RefSeq" id="XP_001652751.1">
    <property type="nucleotide sequence ID" value="XM_001652701.2"/>
</dbReference>
<dbReference type="RefSeq" id="XP_001652752.1">
    <property type="nucleotide sequence ID" value="XM_001652702.1"/>
</dbReference>
<dbReference type="SMR" id="Q172F2"/>
<dbReference type="STRING" id="7159.Q172F2"/>
<dbReference type="PaxDb" id="7159-AAEL007394-PB"/>
<dbReference type="EnsemblMetazoa" id="AAEL007394-RA">
    <property type="protein sequence ID" value="AAEL007394-PA"/>
    <property type="gene ID" value="AAEL007394"/>
</dbReference>
<dbReference type="GeneID" id="5569140"/>
<dbReference type="KEGG" id="aag:5569140"/>
<dbReference type="VEuPathDB" id="VectorBase:AAEL007394"/>
<dbReference type="HOGENOM" id="CLU_1679383_0_0_1"/>
<dbReference type="InParanoid" id="Q172F2"/>
<dbReference type="OMA" id="GYKSNSM"/>
<dbReference type="OrthoDB" id="7766062at2759"/>
<dbReference type="Proteomes" id="UP000008820">
    <property type="component" value="Chromosome 3"/>
</dbReference>
<dbReference type="Proteomes" id="UP000682892">
    <property type="component" value="Unassembled WGS sequence"/>
</dbReference>
<dbReference type="GO" id="GO:0005576">
    <property type="term" value="C:extracellular region"/>
    <property type="evidence" value="ECO:0007669"/>
    <property type="project" value="UniProtKB-SubCell"/>
</dbReference>
<dbReference type="GO" id="GO:0005549">
    <property type="term" value="F:odorant binding"/>
    <property type="evidence" value="ECO:0007669"/>
    <property type="project" value="InterPro"/>
</dbReference>
<dbReference type="Gene3D" id="1.10.238.20">
    <property type="entry name" value="Pheromone/general odorant binding protein domain"/>
    <property type="match status" value="1"/>
</dbReference>
<dbReference type="InterPro" id="IPR036728">
    <property type="entry name" value="PBP_GOBP_sf"/>
</dbReference>
<dbReference type="SUPFAM" id="SSF47565">
    <property type="entry name" value="Insect pheromone/odorant-binding proteins"/>
    <property type="match status" value="1"/>
</dbReference>
<evidence type="ECO:0000255" key="1"/>
<evidence type="ECO:0000269" key="2">
    <source>
    </source>
</evidence>
<evidence type="ECO:0000303" key="3">
    <source>
    </source>
</evidence>
<evidence type="ECO:0000305" key="4"/>
<evidence type="ECO:0000312" key="5">
    <source>
        <dbReference type="EMBL" id="EAT40917.1"/>
    </source>
</evidence>
<evidence type="ECO:0000312" key="6">
    <source>
        <dbReference type="Proteomes" id="UP000008820"/>
    </source>
</evidence>
<keyword id="KW-1185">Reference proteome</keyword>
<keyword id="KW-0964">Secreted</keyword>
<keyword id="KW-0732">Signal</keyword>
<organism evidence="6">
    <name type="scientific">Aedes aegypti</name>
    <name type="common">Yellowfever mosquito</name>
    <name type="synonym">Culex aegypti</name>
    <dbReference type="NCBI Taxonomy" id="7159"/>
    <lineage>
        <taxon>Eukaryota</taxon>
        <taxon>Metazoa</taxon>
        <taxon>Ecdysozoa</taxon>
        <taxon>Arthropoda</taxon>
        <taxon>Hexapoda</taxon>
        <taxon>Insecta</taxon>
        <taxon>Pterygota</taxon>
        <taxon>Neoptera</taxon>
        <taxon>Endopterygota</taxon>
        <taxon>Diptera</taxon>
        <taxon>Nematocera</taxon>
        <taxon>Culicoidea</taxon>
        <taxon>Culicidae</taxon>
        <taxon>Culicinae</taxon>
        <taxon>Aedini</taxon>
        <taxon>Aedes</taxon>
        <taxon>Stegomyia</taxon>
    </lineage>
</organism>